<proteinExistence type="evidence at protein level"/>
<feature type="signal peptide" evidence="2">
    <location>
        <begin position="1"/>
        <end position="19"/>
    </location>
</feature>
<feature type="propeptide" id="PRO_0000315482" evidence="4">
    <location>
        <begin position="20"/>
        <end position="44"/>
    </location>
</feature>
<feature type="peptide" id="PRO_0000315483" description="Conotoxin CaFr179">
    <location>
        <begin position="47"/>
        <end position="77"/>
    </location>
</feature>
<feature type="modified residue" description="Phenylalanine amide" evidence="3">
    <location>
        <position position="77"/>
    </location>
</feature>
<feature type="disulfide bond" evidence="1">
    <location>
        <begin position="52"/>
        <end position="64"/>
    </location>
</feature>
<feature type="disulfide bond" evidence="1">
    <location>
        <begin position="56"/>
        <end position="72"/>
    </location>
</feature>
<feature type="disulfide bond" evidence="1">
    <location>
        <begin position="63"/>
        <end position="76"/>
    </location>
</feature>
<sequence length="78" mass="8759">MSGLGIMVLTLLLLVFMEASHQDAGEKQATQRDAINVRRRRSLARRTVTEECEEDCEDEEKHCCNTNNGPSCARLCFG</sequence>
<accession>Q3YEF0</accession>
<keyword id="KW-0027">Amidation</keyword>
<keyword id="KW-0165">Cleavage on pair of basic residues</keyword>
<keyword id="KW-1015">Disulfide bond</keyword>
<keyword id="KW-0960">Knottin</keyword>
<keyword id="KW-0528">Neurotoxin</keyword>
<keyword id="KW-0964">Secreted</keyword>
<keyword id="KW-0732">Signal</keyword>
<keyword id="KW-0800">Toxin</keyword>
<name>O379_CONCB</name>
<protein>
    <recommendedName>
        <fullName>Conotoxin CaFr179</fullName>
    </recommendedName>
</protein>
<comment type="subcellular location">
    <subcellularLocation>
        <location evidence="1">Secreted</location>
    </subcellularLocation>
</comment>
<comment type="tissue specificity">
    <text>Expressed by the venom duct.</text>
</comment>
<comment type="domain">
    <text evidence="1">The presence of a 'disulfide through disulfide knot' structurally defines this protein as a knottin.</text>
</comment>
<comment type="domain">
    <text>The cysteine framework is VI/VII (C-C-CC-C-C).</text>
</comment>
<comment type="similarity">
    <text evidence="4">Belongs to the conotoxin O3 superfamily.</text>
</comment>
<reference key="1">
    <citation type="journal article" date="2006" name="Chem. Biol. Drug Des.">
        <title>Novel O-superfamily conotoxins identified by cDNA cloning from three vermivorous Conus species.</title>
        <authorList>
            <person name="Zhangsun D."/>
            <person name="Luo S."/>
            <person name="Wu Y."/>
            <person name="Zhu X."/>
            <person name="Hu Y."/>
            <person name="Xie L."/>
        </authorList>
    </citation>
    <scope>NUCLEOTIDE SEQUENCE [MRNA]</scope>
    <scope>AMIDATION AT PHE-77</scope>
    <source>
        <tissue>Venom duct</tissue>
    </source>
</reference>
<organism>
    <name type="scientific">Conus caracteristicus</name>
    <name type="common">Characteristic cone</name>
    <dbReference type="NCBI Taxonomy" id="89440"/>
    <lineage>
        <taxon>Eukaryota</taxon>
        <taxon>Metazoa</taxon>
        <taxon>Spiralia</taxon>
        <taxon>Lophotrochozoa</taxon>
        <taxon>Mollusca</taxon>
        <taxon>Gastropoda</taxon>
        <taxon>Caenogastropoda</taxon>
        <taxon>Neogastropoda</taxon>
        <taxon>Conoidea</taxon>
        <taxon>Conidae</taxon>
        <taxon>Conus</taxon>
    </lineage>
</organism>
<dbReference type="EMBL" id="DQ141163">
    <property type="protein sequence ID" value="AAZ83764.1"/>
    <property type="molecule type" value="mRNA"/>
</dbReference>
<dbReference type="ConoServer" id="2723">
    <property type="toxin name" value="CaFr179 precursor"/>
</dbReference>
<dbReference type="GO" id="GO:0005576">
    <property type="term" value="C:extracellular region"/>
    <property type="evidence" value="ECO:0007669"/>
    <property type="project" value="UniProtKB-SubCell"/>
</dbReference>
<dbReference type="GO" id="GO:0008200">
    <property type="term" value="F:ion channel inhibitor activity"/>
    <property type="evidence" value="ECO:0007669"/>
    <property type="project" value="InterPro"/>
</dbReference>
<dbReference type="GO" id="GO:0090729">
    <property type="term" value="F:toxin activity"/>
    <property type="evidence" value="ECO:0007669"/>
    <property type="project" value="UniProtKB-KW"/>
</dbReference>
<dbReference type="InterPro" id="IPR004214">
    <property type="entry name" value="Conotoxin"/>
</dbReference>
<dbReference type="Pfam" id="PF02950">
    <property type="entry name" value="Conotoxin"/>
    <property type="match status" value="1"/>
</dbReference>
<evidence type="ECO:0000250" key="1"/>
<evidence type="ECO:0000255" key="2"/>
<evidence type="ECO:0000269" key="3">
    <source>
    </source>
</evidence>
<evidence type="ECO:0000305" key="4"/>